<reference key="1">
    <citation type="submission" date="2007-07" db="EMBL/GenBank/DDBJ databases">
        <title>Complete genome sequence of Campylobacter hominis ATCC BAA-381, a commensal isolated from the human gastrointestinal tract.</title>
        <authorList>
            <person name="Fouts D.E."/>
            <person name="Mongodin E.F."/>
            <person name="Puiu D."/>
            <person name="Sebastian Y."/>
            <person name="Miller W.G."/>
            <person name="Mandrell R.E."/>
            <person name="Nelson K.E."/>
        </authorList>
    </citation>
    <scope>NUCLEOTIDE SEQUENCE [LARGE SCALE GENOMIC DNA]</scope>
    <source>
        <strain>ATCC BAA-381 / DSM 21671 / CCUG 45161 / LMG 19568 / NCTC 13146 / CH001A</strain>
    </source>
</reference>
<protein>
    <recommendedName>
        <fullName evidence="1">Small ribosomal subunit protein bS6</fullName>
    </recommendedName>
    <alternativeName>
        <fullName evidence="3">30S ribosomal protein S6</fullName>
    </alternativeName>
</protein>
<sequence length="145" mass="17012">MKHYEVLFIVKPTLQDDEVKTKVDFVKEVITKNGGEIAAVVEMGTRKLAYKIDKYERGVYFVIYFTAPTKLIAELVRNLRINEDIIRFLTIKYENKKEISAWEKLSHGVKLSENMKKNERKAPKEPVKKDEEENKESEEEITSEE</sequence>
<keyword id="KW-1185">Reference proteome</keyword>
<keyword id="KW-0687">Ribonucleoprotein</keyword>
<keyword id="KW-0689">Ribosomal protein</keyword>
<keyword id="KW-0694">RNA-binding</keyword>
<keyword id="KW-0699">rRNA-binding</keyword>
<gene>
    <name evidence="1" type="primary">rpsF</name>
    <name type="ordered locus">CHAB381_0241</name>
</gene>
<dbReference type="EMBL" id="CP000776">
    <property type="protein sequence ID" value="ABS51406.1"/>
    <property type="molecule type" value="Genomic_DNA"/>
</dbReference>
<dbReference type="RefSeq" id="WP_012108128.1">
    <property type="nucleotide sequence ID" value="NC_009714.1"/>
</dbReference>
<dbReference type="SMR" id="A7I006"/>
<dbReference type="STRING" id="360107.CHAB381_0241"/>
<dbReference type="KEGG" id="cha:CHAB381_0241"/>
<dbReference type="eggNOG" id="COG0360">
    <property type="taxonomic scope" value="Bacteria"/>
</dbReference>
<dbReference type="HOGENOM" id="CLU_113441_4_1_7"/>
<dbReference type="OrthoDB" id="9812702at2"/>
<dbReference type="Proteomes" id="UP000002407">
    <property type="component" value="Chromosome"/>
</dbReference>
<dbReference type="GO" id="GO:0022627">
    <property type="term" value="C:cytosolic small ribosomal subunit"/>
    <property type="evidence" value="ECO:0007669"/>
    <property type="project" value="TreeGrafter"/>
</dbReference>
<dbReference type="GO" id="GO:0070181">
    <property type="term" value="F:small ribosomal subunit rRNA binding"/>
    <property type="evidence" value="ECO:0007669"/>
    <property type="project" value="TreeGrafter"/>
</dbReference>
<dbReference type="GO" id="GO:0003735">
    <property type="term" value="F:structural constituent of ribosome"/>
    <property type="evidence" value="ECO:0007669"/>
    <property type="project" value="InterPro"/>
</dbReference>
<dbReference type="GO" id="GO:0006412">
    <property type="term" value="P:translation"/>
    <property type="evidence" value="ECO:0007669"/>
    <property type="project" value="UniProtKB-UniRule"/>
</dbReference>
<dbReference type="CDD" id="cd00473">
    <property type="entry name" value="bS6"/>
    <property type="match status" value="1"/>
</dbReference>
<dbReference type="Gene3D" id="3.30.70.60">
    <property type="match status" value="1"/>
</dbReference>
<dbReference type="HAMAP" id="MF_00360">
    <property type="entry name" value="Ribosomal_bS6"/>
    <property type="match status" value="1"/>
</dbReference>
<dbReference type="InterPro" id="IPR000529">
    <property type="entry name" value="Ribosomal_bS6"/>
</dbReference>
<dbReference type="InterPro" id="IPR035980">
    <property type="entry name" value="Ribosomal_bS6_sf"/>
</dbReference>
<dbReference type="InterPro" id="IPR020814">
    <property type="entry name" value="Ribosomal_S6_plastid/chlpt"/>
</dbReference>
<dbReference type="InterPro" id="IPR014717">
    <property type="entry name" value="Transl_elong_EF1B/ribsomal_bS6"/>
</dbReference>
<dbReference type="NCBIfam" id="TIGR00166">
    <property type="entry name" value="S6"/>
    <property type="match status" value="1"/>
</dbReference>
<dbReference type="PANTHER" id="PTHR21011">
    <property type="entry name" value="MITOCHONDRIAL 28S RIBOSOMAL PROTEIN S6"/>
    <property type="match status" value="1"/>
</dbReference>
<dbReference type="PANTHER" id="PTHR21011:SF1">
    <property type="entry name" value="SMALL RIBOSOMAL SUBUNIT PROTEIN BS6M"/>
    <property type="match status" value="1"/>
</dbReference>
<dbReference type="Pfam" id="PF01250">
    <property type="entry name" value="Ribosomal_S6"/>
    <property type="match status" value="1"/>
</dbReference>
<dbReference type="SUPFAM" id="SSF54995">
    <property type="entry name" value="Ribosomal protein S6"/>
    <property type="match status" value="1"/>
</dbReference>
<comment type="function">
    <text evidence="1">Binds together with bS18 to 16S ribosomal RNA.</text>
</comment>
<comment type="similarity">
    <text evidence="1">Belongs to the bacterial ribosomal protein bS6 family.</text>
</comment>
<evidence type="ECO:0000255" key="1">
    <source>
        <dbReference type="HAMAP-Rule" id="MF_00360"/>
    </source>
</evidence>
<evidence type="ECO:0000256" key="2">
    <source>
        <dbReference type="SAM" id="MobiDB-lite"/>
    </source>
</evidence>
<evidence type="ECO:0000305" key="3"/>
<accession>A7I006</accession>
<name>RS6_CAMHC</name>
<organism>
    <name type="scientific">Campylobacter hominis (strain ATCC BAA-381 / DSM 21671 / CCUG 45161 / LMG 19568 / NCTC 13146 / CH001A)</name>
    <dbReference type="NCBI Taxonomy" id="360107"/>
    <lineage>
        <taxon>Bacteria</taxon>
        <taxon>Pseudomonadati</taxon>
        <taxon>Campylobacterota</taxon>
        <taxon>Epsilonproteobacteria</taxon>
        <taxon>Campylobacterales</taxon>
        <taxon>Campylobacteraceae</taxon>
        <taxon>Campylobacter</taxon>
    </lineage>
</organism>
<feature type="chain" id="PRO_1000005240" description="Small ribosomal subunit protein bS6">
    <location>
        <begin position="1"/>
        <end position="145"/>
    </location>
</feature>
<feature type="region of interest" description="Disordered" evidence="2">
    <location>
        <begin position="113"/>
        <end position="145"/>
    </location>
</feature>
<feature type="compositionally biased region" description="Basic and acidic residues" evidence="2">
    <location>
        <begin position="113"/>
        <end position="132"/>
    </location>
</feature>
<feature type="compositionally biased region" description="Acidic residues" evidence="2">
    <location>
        <begin position="133"/>
        <end position="145"/>
    </location>
</feature>
<proteinExistence type="inferred from homology"/>